<accession>Q9QBU3</accession>
<reference key="1">
    <citation type="journal article" date="2001" name="Plant Dis.">
        <title>Characterization of a virus from pigeonpea with affinities to species in the genus Aureusvirus, family Tombusviridae.</title>
        <authorList>
            <person name="Lava Kumar P."/>
            <person name="Jones A.T."/>
            <person name="Sreenivasulu P."/>
            <person name="Fenton B."/>
            <person name="Reddy D.V.R."/>
        </authorList>
        <dbReference type="AGRICOLA" id="IND23224278"/>
    </citation>
    <scope>NUCLEOTIDE SEQUENCE [GENOMIC RNA]</scope>
</reference>
<sequence length="372" mass="39788">MALVKRNNNMALIATEAGKLAAVKAGQVMLSPAGRELIWNGVNWVRRKLGRSKKSDVILHPGVLPGAIAAPVANTRIIRASKPKFTRSKGSVTIAHRELLGQFNNSSGLVVNGGVSGNLYRINPSNPVVFPWLQGIAASFDQYKFDRVQLQYVPMCATTETGRVAIYFDKDQQDVEPADRVELANMGHWTESAPWCESTLNVPVDNVKRFMNDNTTTDRKLVDLGQIGLATYGGGSTNPVGDLFIHYTITLFEPQPLASLVETEQSGAGAAPFGTNLVTVSSNATTTIITFRGPGVYLLALSQRAASFTTLVTAGGAVVNSHTTLFSGPAYQSIANITATIPGGSITYNGTLFGNYTLQVTRAKISNNATLI</sequence>
<evidence type="ECO:0000305" key="1"/>
<dbReference type="EMBL" id="AJ243370">
    <property type="protein sequence ID" value="CAB59794.1"/>
    <property type="molecule type" value="Genomic_RNA"/>
</dbReference>
<dbReference type="SMR" id="Q9QBU3"/>
<dbReference type="Proteomes" id="UP000000572">
    <property type="component" value="Genome"/>
</dbReference>
<dbReference type="GO" id="GO:0039617">
    <property type="term" value="C:T=3 icosahedral viral capsid"/>
    <property type="evidence" value="ECO:0007669"/>
    <property type="project" value="UniProtKB-KW"/>
</dbReference>
<dbReference type="GO" id="GO:0005198">
    <property type="term" value="F:structural molecule activity"/>
    <property type="evidence" value="ECO:0007669"/>
    <property type="project" value="InterPro"/>
</dbReference>
<dbReference type="Gene3D" id="2.60.120.20">
    <property type="match status" value="1"/>
</dbReference>
<dbReference type="InterPro" id="IPR000937">
    <property type="entry name" value="Capsid_prot_S-dom_vir"/>
</dbReference>
<dbReference type="InterPro" id="IPR029053">
    <property type="entry name" value="Viral_coat"/>
</dbReference>
<dbReference type="Pfam" id="PF00729">
    <property type="entry name" value="Viral_coat"/>
    <property type="match status" value="1"/>
</dbReference>
<dbReference type="PRINTS" id="PR00233">
    <property type="entry name" value="ICOSAHEDRAL"/>
</dbReference>
<dbReference type="SUPFAM" id="SSF88633">
    <property type="entry name" value="Positive stranded ssRNA viruses"/>
    <property type="match status" value="1"/>
</dbReference>
<dbReference type="PROSITE" id="PS00555">
    <property type="entry name" value="ICOSAH_VIR_COAT_S"/>
    <property type="match status" value="1"/>
</dbReference>
<keyword id="KW-0167">Capsid protein</keyword>
<keyword id="KW-1185">Reference proteome</keyword>
<keyword id="KW-1142">T=3 icosahedral capsid protein</keyword>
<keyword id="KW-0946">Virion</keyword>
<organismHost>
    <name type="scientific">Cajanus cajan</name>
    <name type="common">Pigeon pea</name>
    <name type="synonym">Cajanus indicus</name>
    <dbReference type="NCBI Taxonomy" id="3821"/>
</organismHost>
<organismHost>
    <name type="scientific">Pothos</name>
    <dbReference type="NCBI Taxonomy" id="174212"/>
</organismHost>
<feature type="chain" id="PRO_0000399482" description="Capsid protein">
    <location>
        <begin position="1"/>
        <end position="372"/>
    </location>
</feature>
<protein>
    <recommendedName>
        <fullName>Capsid protein</fullName>
    </recommendedName>
    <alternativeName>
        <fullName>p40</fullName>
    </alternativeName>
</protein>
<comment type="function">
    <text>Capsid protein self-assembles to form an icosahedral capsid with a T=3 symmetry, about 32-35 nm in diameter, and consisting of 180 capsid proteins.</text>
</comment>
<comment type="subunit">
    <text evidence="1">Homomultimer.</text>
</comment>
<comment type="subcellular location">
    <subcellularLocation>
        <location evidence="1">Virion</location>
    </subcellularLocation>
</comment>
<comment type="similarity">
    <text evidence="1">Belongs to the icosahedral plant coat protein family.</text>
</comment>
<gene>
    <name type="ORF">ORF2</name>
</gene>
<organism>
    <name type="scientific">Pothos latent virus (isolate Pigeonpea/India)</name>
    <name type="common">PoLV</name>
    <dbReference type="NCBI Taxonomy" id="652109"/>
    <lineage>
        <taxon>Viruses</taxon>
        <taxon>Riboviria</taxon>
        <taxon>Orthornavirae</taxon>
        <taxon>Kitrinoviricota</taxon>
        <taxon>Tolucaviricetes</taxon>
        <taxon>Tolivirales</taxon>
        <taxon>Tombusviridae</taxon>
        <taxon>Procedovirinae</taxon>
        <taxon>Aureusvirus</taxon>
        <taxon>Aureusvirus aurei</taxon>
    </lineage>
</organism>
<name>CAPSD_POLVP</name>
<proteinExistence type="inferred from homology"/>